<organism>
    <name type="scientific">Photobacterium profundum (strain SS9)</name>
    <dbReference type="NCBI Taxonomy" id="298386"/>
    <lineage>
        <taxon>Bacteria</taxon>
        <taxon>Pseudomonadati</taxon>
        <taxon>Pseudomonadota</taxon>
        <taxon>Gammaproteobacteria</taxon>
        <taxon>Vibrionales</taxon>
        <taxon>Vibrionaceae</taxon>
        <taxon>Photobacterium</taxon>
    </lineage>
</organism>
<name>MGLA1_PHOPR</name>
<keyword id="KW-0067">ATP-binding</keyword>
<keyword id="KW-0997">Cell inner membrane</keyword>
<keyword id="KW-1003">Cell membrane</keyword>
<keyword id="KW-0472">Membrane</keyword>
<keyword id="KW-0547">Nucleotide-binding</keyword>
<keyword id="KW-1185">Reference proteome</keyword>
<keyword id="KW-0677">Repeat</keyword>
<keyword id="KW-0762">Sugar transport</keyword>
<keyword id="KW-1278">Translocase</keyword>
<keyword id="KW-0813">Transport</keyword>
<protein>
    <recommendedName>
        <fullName evidence="1">Galactose/methyl galactoside import ATP-binding protein MglA 1</fullName>
        <ecNumber evidence="1">7.5.2.11</ecNumber>
    </recommendedName>
</protein>
<feature type="chain" id="PRO_0000261371" description="Galactose/methyl galactoside import ATP-binding protein MglA 1">
    <location>
        <begin position="1"/>
        <end position="497"/>
    </location>
</feature>
<feature type="domain" description="ABC transporter 1" evidence="1">
    <location>
        <begin position="6"/>
        <end position="243"/>
    </location>
</feature>
<feature type="domain" description="ABC transporter 2" evidence="1">
    <location>
        <begin position="256"/>
        <end position="494"/>
    </location>
</feature>
<feature type="binding site" evidence="1">
    <location>
        <begin position="38"/>
        <end position="45"/>
    </location>
    <ligand>
        <name>ATP</name>
        <dbReference type="ChEBI" id="CHEBI:30616"/>
    </ligand>
</feature>
<accession>Q6LK34</accession>
<evidence type="ECO:0000255" key="1">
    <source>
        <dbReference type="HAMAP-Rule" id="MF_01717"/>
    </source>
</evidence>
<reference key="1">
    <citation type="journal article" date="2005" name="Science">
        <title>Life at depth: Photobacterium profundum genome sequence and expression analysis.</title>
        <authorList>
            <person name="Vezzi A."/>
            <person name="Campanaro S."/>
            <person name="D'Angelo M."/>
            <person name="Simonato F."/>
            <person name="Vitulo N."/>
            <person name="Lauro F.M."/>
            <person name="Cestaro A."/>
            <person name="Malacrida G."/>
            <person name="Simionati B."/>
            <person name="Cannata N."/>
            <person name="Romualdi C."/>
            <person name="Bartlett D.H."/>
            <person name="Valle G."/>
        </authorList>
    </citation>
    <scope>NUCLEOTIDE SEQUENCE [LARGE SCALE GENOMIC DNA]</scope>
    <source>
        <strain>ATCC BAA-1253 / SS9</strain>
    </source>
</reference>
<sequence length="497" mass="55487">MNQVLLEMRGITKTFPGVKALDNVQLTLKKGRVMALMGENGAGKSTLMKVLFGIYQRDCGTIRYQGEQVNYSGAKEALEAGVSMIHQELSPILHRSIAENIWLGREPLKGPLRLIDHAKMYRDTTELLKKLDLHLDPRTPMSELTVATMQMIEISKAISYNSKIIIMDEPTSALTGKEVDHLFEIIEKLKKQGVSIVYISHKMDEIFRICDDITVFRDGCYIGEREAQNTNHDELVQMMVGRDLGDVFPPPTAKPGKVRLEVKNLSVEGVFDNISFKLHEGEILGIAGLVGAGRTELIETLFGVRKHDVGEIWINGENVEIKTPQDAISHKMAFLTEDRRQSGLYLMLDIFANTSIAHLDAYRNKVVNVLDVRSMQKDCASQCTKLKVKTPGMAEKIDNLSGGNQQKVLLARWMLTKPDILFLDEPTRGIDIGAKSEIYKLMRLLTGMGKSLVMISSELPEVIGMSDRILVMHGGKLKGELDGKDASQQQVMSMAFN</sequence>
<comment type="function">
    <text evidence="1">Part of the ABC transporter complex MglABC involved in galactose/methyl galactoside import. Responsible for energy coupling to the transport system.</text>
</comment>
<comment type="catalytic activity">
    <reaction evidence="1">
        <text>D-galactose(out) + ATP + H2O = D-galactose(in) + ADP + phosphate + H(+)</text>
        <dbReference type="Rhea" id="RHEA:60156"/>
        <dbReference type="ChEBI" id="CHEBI:4139"/>
        <dbReference type="ChEBI" id="CHEBI:15377"/>
        <dbReference type="ChEBI" id="CHEBI:15378"/>
        <dbReference type="ChEBI" id="CHEBI:30616"/>
        <dbReference type="ChEBI" id="CHEBI:43474"/>
        <dbReference type="ChEBI" id="CHEBI:456216"/>
        <dbReference type="EC" id="7.5.2.11"/>
    </reaction>
    <physiologicalReaction direction="left-to-right" evidence="1">
        <dbReference type="Rhea" id="RHEA:60157"/>
    </physiologicalReaction>
</comment>
<comment type="catalytic activity">
    <reaction evidence="1">
        <text>methyl beta-D-galactoside(out) + ATP + H2O = methyl beta-D-galactoside(in) + ADP + phosphate + H(+)</text>
        <dbReference type="Rhea" id="RHEA:72531"/>
        <dbReference type="ChEBI" id="CHEBI:15377"/>
        <dbReference type="ChEBI" id="CHEBI:15378"/>
        <dbReference type="ChEBI" id="CHEBI:17540"/>
        <dbReference type="ChEBI" id="CHEBI:30616"/>
        <dbReference type="ChEBI" id="CHEBI:43474"/>
        <dbReference type="ChEBI" id="CHEBI:456216"/>
    </reaction>
    <physiologicalReaction direction="left-to-right" evidence="1">
        <dbReference type="Rhea" id="RHEA:72532"/>
    </physiologicalReaction>
</comment>
<comment type="subunit">
    <text evidence="1">The complex is composed of one ATP-binding protein (MglA), two transmembrane proteins (MglC) and a solute-binding protein (MglB).</text>
</comment>
<comment type="subcellular location">
    <subcellularLocation>
        <location evidence="1">Cell inner membrane</location>
        <topology evidence="1">Peripheral membrane protein</topology>
    </subcellularLocation>
</comment>
<comment type="similarity">
    <text evidence="1">Belongs to the ABC transporter superfamily. Galactose/methyl galactoside importer (TC 3.A.1.2.3) family.</text>
</comment>
<gene>
    <name evidence="1" type="primary">mglA1</name>
    <name type="ordered locus">PBPRB0473</name>
</gene>
<dbReference type="EC" id="7.5.2.11" evidence="1"/>
<dbReference type="EMBL" id="CR378676">
    <property type="protein sequence ID" value="CAG22346.1"/>
    <property type="molecule type" value="Genomic_DNA"/>
</dbReference>
<dbReference type="RefSeq" id="WP_011220555.1">
    <property type="nucleotide sequence ID" value="NC_006371.1"/>
</dbReference>
<dbReference type="SMR" id="Q6LK34"/>
<dbReference type="STRING" id="298386.PBPRB0473"/>
<dbReference type="KEGG" id="ppr:PBPRB0473"/>
<dbReference type="eggNOG" id="COG1129">
    <property type="taxonomic scope" value="Bacteria"/>
</dbReference>
<dbReference type="HOGENOM" id="CLU_000604_92_3_6"/>
<dbReference type="Proteomes" id="UP000000593">
    <property type="component" value="Chromosome 2"/>
</dbReference>
<dbReference type="GO" id="GO:0005886">
    <property type="term" value="C:plasma membrane"/>
    <property type="evidence" value="ECO:0007669"/>
    <property type="project" value="UniProtKB-SubCell"/>
</dbReference>
<dbReference type="GO" id="GO:0005524">
    <property type="term" value="F:ATP binding"/>
    <property type="evidence" value="ECO:0007669"/>
    <property type="project" value="UniProtKB-KW"/>
</dbReference>
<dbReference type="GO" id="GO:0016887">
    <property type="term" value="F:ATP hydrolysis activity"/>
    <property type="evidence" value="ECO:0007669"/>
    <property type="project" value="InterPro"/>
</dbReference>
<dbReference type="CDD" id="cd03216">
    <property type="entry name" value="ABC_Carb_Monos_I"/>
    <property type="match status" value="1"/>
</dbReference>
<dbReference type="CDD" id="cd03215">
    <property type="entry name" value="ABC_Carb_Monos_II"/>
    <property type="match status" value="1"/>
</dbReference>
<dbReference type="FunFam" id="3.40.50.300:FF:000126">
    <property type="entry name" value="Galactose/methyl galactoside import ATP-binding protein MglA"/>
    <property type="match status" value="1"/>
</dbReference>
<dbReference type="FunFam" id="3.40.50.300:FF:000127">
    <property type="entry name" value="Ribose import ATP-binding protein RbsA"/>
    <property type="match status" value="1"/>
</dbReference>
<dbReference type="Gene3D" id="3.40.50.300">
    <property type="entry name" value="P-loop containing nucleotide triphosphate hydrolases"/>
    <property type="match status" value="2"/>
</dbReference>
<dbReference type="InterPro" id="IPR003593">
    <property type="entry name" value="AAA+_ATPase"/>
</dbReference>
<dbReference type="InterPro" id="IPR050107">
    <property type="entry name" value="ABC_carbohydrate_import_ATPase"/>
</dbReference>
<dbReference type="InterPro" id="IPR003439">
    <property type="entry name" value="ABC_transporter-like_ATP-bd"/>
</dbReference>
<dbReference type="InterPro" id="IPR017871">
    <property type="entry name" value="ABC_transporter-like_CS"/>
</dbReference>
<dbReference type="InterPro" id="IPR027417">
    <property type="entry name" value="P-loop_NTPase"/>
</dbReference>
<dbReference type="PANTHER" id="PTHR43790">
    <property type="entry name" value="CARBOHYDRATE TRANSPORT ATP-BINDING PROTEIN MG119-RELATED"/>
    <property type="match status" value="1"/>
</dbReference>
<dbReference type="PANTHER" id="PTHR43790:SF7">
    <property type="entry name" value="GALACTOSE_METHYL GALACTOSIDE IMPORT ATP-BINDING PROTEIN MGLA"/>
    <property type="match status" value="1"/>
</dbReference>
<dbReference type="Pfam" id="PF00005">
    <property type="entry name" value="ABC_tran"/>
    <property type="match status" value="2"/>
</dbReference>
<dbReference type="SMART" id="SM00382">
    <property type="entry name" value="AAA"/>
    <property type="match status" value="2"/>
</dbReference>
<dbReference type="SUPFAM" id="SSF52540">
    <property type="entry name" value="P-loop containing nucleoside triphosphate hydrolases"/>
    <property type="match status" value="2"/>
</dbReference>
<dbReference type="PROSITE" id="PS00211">
    <property type="entry name" value="ABC_TRANSPORTER_1"/>
    <property type="match status" value="1"/>
</dbReference>
<dbReference type="PROSITE" id="PS50893">
    <property type="entry name" value="ABC_TRANSPORTER_2"/>
    <property type="match status" value="2"/>
</dbReference>
<dbReference type="PROSITE" id="PS51260">
    <property type="entry name" value="MGLA"/>
    <property type="match status" value="1"/>
</dbReference>
<proteinExistence type="inferred from homology"/>